<comment type="function">
    <text>Receptor for relaxin. The activity of this receptor is mediated by G proteins leading to stimulation of adenylate cyclase and an increase of cAMP. May also be a receptor for Leydig insulin-like peptide (INSL3).</text>
</comment>
<comment type="subcellular location">
    <subcellularLocation>
        <location>Cell membrane</location>
        <topology>Multi-pass membrane protein</topology>
    </subcellularLocation>
</comment>
<comment type="alternative products">
    <event type="alternative splicing"/>
    <isoform>
        <id>Q8WXD0-1</id>
        <name>1</name>
        <sequence type="displayed"/>
    </isoform>
    <isoform>
        <id>Q8WXD0-2</id>
        <name>2</name>
        <sequence type="described" ref="VSP_042831"/>
    </isoform>
</comment>
<comment type="tissue specificity">
    <text>Expressed mainly in the brain, kidney, muscle, testis, thyroid, uterus, peripheral blood cells and bone marrow.</text>
</comment>
<comment type="disease" evidence="6">
    <disease id="DI-01455">
        <name>Cryptorchidism</name>
        <acronym>CRYPTO</acronym>
        <description>One of the most frequent congenital abnormalities in humans, involving 2-5% of male births. Cryptorchidism is associated with increased risk of infertility and testicular cancer.</description>
        <dbReference type="MIM" id="219050"/>
    </disease>
    <text>The disease is caused by variants affecting the gene represented in this entry.</text>
</comment>
<comment type="similarity">
    <text evidence="4">Belongs to the G-protein coupled receptor 1 family.</text>
</comment>
<comment type="caution">
    <text evidence="8">It is uncertain whether Met-1 or Met-18 is the initiator.</text>
</comment>
<accession>Q8WXD0</accession>
<accession>B1ALE9</accession>
<accession>Q3KU23</accession>
<sequence>MIVFLVFKHLFSLRLITMFFLLHFIVLINVKDFALTQGSMITPSCQKGYFPCGNLTKCLPRAFHCDGKDDCGNGADEENCGDTSGWATIFGTVHGNANSVALTQECFLKQYPQCCDCKETELECVNGDLKSVPMISNNVTLLSLKKNKIHSLPDKVFIKYTKLKKIFLQHNCIRHISRKAFFGLCNLQILYLNHNCITTLRPGIFKDLHQLTWLILDDNPITRISQRLFTGLNSLFFLSMVNNYLEALPKQMCAQMPQLNWVDLEGNRIKYLTNSTFLSCDSLTVLFLPRNQIGFVPEKTFSSLKNLGELDLSSNTITELSPHLFKDLKLLQKLNLSSNPLMYLHKNQFESLKQLQSLDLERIEIPNINTRMFQPMKNLSHIYFKNFRYCSYAPHVRICMPLTDGISSFEDLLANNILRIFVWVIAFITCFGNLFVIGMRSFIKAENTTHAMSIKILCCADCLMGVYLFFVGIFDIKYRGQYQKYALLWMESVQCRLMGFLAMLSTEVSVLLLTYLTLEKFLVIVFPFSNIRPGKRQTSVILICIWMAGFLIAVIPFWNKDYFGNFYGKNGVCFPLYYDQTEDIGSKGYSLGIFLGVNLLAFLIIVFSYITMFCSIQKTALQTTEVRNCFGREVAVANRFFFIVFSDAICWIPVFVVKILSLFRVEIPDTMTSWIVIFFLPVNSALNPILYTLTTNFFKDKLKQLLHKHQRKSIFKIKKKSLSTSIVWIEDSSSLKLGVLNKITLGDSIMKPVS</sequence>
<proteinExistence type="evidence at protein level"/>
<reference key="1">
    <citation type="journal article" date="2002" name="Science">
        <title>Activation of orphan receptors by the hormone relaxin.</title>
        <authorList>
            <person name="Hsu S.Y."/>
            <person name="Nakabayashi K."/>
            <person name="Nishi S."/>
            <person name="Kumagai J."/>
            <person name="Kudo M."/>
            <person name="Sherwood O.D."/>
            <person name="Hsueh A.J.W."/>
        </authorList>
    </citation>
    <scope>NUCLEOTIDE SEQUENCE [MRNA] (ISOFORM 1)</scope>
    <scope>MUTAGENESIS OF ASP-647</scope>
</reference>
<reference key="2">
    <citation type="journal article" date="2002" name="Hum. Mol. Genet.">
        <title>Mutations of the GREAT gene cause cryptorchidism.</title>
        <authorList>
            <person name="Gorlov I.P."/>
            <person name="Kamat A."/>
            <person name="Bogatcheva N.V."/>
            <person name="Jones E."/>
            <person name="Lamb D.J."/>
            <person name="Truong A."/>
            <person name="Bishop C.E."/>
            <person name="McElreavey K."/>
            <person name="Agoulnik A.I."/>
        </authorList>
    </citation>
    <scope>NUCLEOTIDE SEQUENCE [MRNA] (ISOFORM 1)</scope>
    <scope>VARIANT CRYPTO PRO-222</scope>
    <scope>VARIANT VAL-604</scope>
</reference>
<reference key="3">
    <citation type="journal article" date="2005" name="Mol. Hum. Reprod.">
        <title>Splice variants of the relaxin and INSL3 receptors reveal unanticipated molecular complexity.</title>
        <authorList>
            <person name="Muda M."/>
            <person name="He C."/>
            <person name="Martini P.G.V."/>
            <person name="Ferraro T."/>
            <person name="Layfield S."/>
            <person name="Taylor D."/>
            <person name="Chevrier C."/>
            <person name="Schweickhardt R."/>
            <person name="Kelton C."/>
            <person name="Ryan P.L."/>
            <person name="Bathgate R.A.D."/>
        </authorList>
    </citation>
    <scope>NUCLEOTIDE SEQUENCE [MRNA] (ISOFORM 2)</scope>
</reference>
<reference key="4">
    <citation type="journal article" date="2004" name="Nature">
        <title>The DNA sequence and analysis of human chromosome 13.</title>
        <authorList>
            <person name="Dunham A."/>
            <person name="Matthews L.H."/>
            <person name="Burton J."/>
            <person name="Ashurst J.L."/>
            <person name="Howe K.L."/>
            <person name="Ashcroft K.J."/>
            <person name="Beare D.M."/>
            <person name="Burford D.C."/>
            <person name="Hunt S.E."/>
            <person name="Griffiths-Jones S."/>
            <person name="Jones M.C."/>
            <person name="Keenan S.J."/>
            <person name="Oliver K."/>
            <person name="Scott C.E."/>
            <person name="Ainscough R."/>
            <person name="Almeida J.P."/>
            <person name="Ambrose K.D."/>
            <person name="Andrews D.T."/>
            <person name="Ashwell R.I.S."/>
            <person name="Babbage A.K."/>
            <person name="Bagguley C.L."/>
            <person name="Bailey J."/>
            <person name="Bannerjee R."/>
            <person name="Barlow K.F."/>
            <person name="Bates K."/>
            <person name="Beasley H."/>
            <person name="Bird C.P."/>
            <person name="Bray-Allen S."/>
            <person name="Brown A.J."/>
            <person name="Brown J.Y."/>
            <person name="Burrill W."/>
            <person name="Carder C."/>
            <person name="Carter N.P."/>
            <person name="Chapman J.C."/>
            <person name="Clamp M.E."/>
            <person name="Clark S.Y."/>
            <person name="Clarke G."/>
            <person name="Clee C.M."/>
            <person name="Clegg S.C."/>
            <person name="Cobley V."/>
            <person name="Collins J.E."/>
            <person name="Corby N."/>
            <person name="Coville G.J."/>
            <person name="Deloukas P."/>
            <person name="Dhami P."/>
            <person name="Dunham I."/>
            <person name="Dunn M."/>
            <person name="Earthrowl M.E."/>
            <person name="Ellington A.G."/>
            <person name="Faulkner L."/>
            <person name="Frankish A.G."/>
            <person name="Frankland J."/>
            <person name="French L."/>
            <person name="Garner P."/>
            <person name="Garnett J."/>
            <person name="Gilbert J.G.R."/>
            <person name="Gilson C.J."/>
            <person name="Ghori J."/>
            <person name="Grafham D.V."/>
            <person name="Gribble S.M."/>
            <person name="Griffiths C."/>
            <person name="Hall R.E."/>
            <person name="Hammond S."/>
            <person name="Harley J.L."/>
            <person name="Hart E.A."/>
            <person name="Heath P.D."/>
            <person name="Howden P.J."/>
            <person name="Huckle E.J."/>
            <person name="Hunt P.J."/>
            <person name="Hunt A.R."/>
            <person name="Johnson C."/>
            <person name="Johnson D."/>
            <person name="Kay M."/>
            <person name="Kimberley A.M."/>
            <person name="King A."/>
            <person name="Laird G.K."/>
            <person name="Langford C.J."/>
            <person name="Lawlor S."/>
            <person name="Leongamornlert D.A."/>
            <person name="Lloyd D.M."/>
            <person name="Lloyd C."/>
            <person name="Loveland J.E."/>
            <person name="Lovell J."/>
            <person name="Martin S."/>
            <person name="Mashreghi-Mohammadi M."/>
            <person name="McLaren S.J."/>
            <person name="McMurray A."/>
            <person name="Milne S."/>
            <person name="Moore M.J.F."/>
            <person name="Nickerson T."/>
            <person name="Palmer S.A."/>
            <person name="Pearce A.V."/>
            <person name="Peck A.I."/>
            <person name="Pelan S."/>
            <person name="Phillimore B."/>
            <person name="Porter K.M."/>
            <person name="Rice C.M."/>
            <person name="Searle S."/>
            <person name="Sehra H.K."/>
            <person name="Shownkeen R."/>
            <person name="Skuce C.D."/>
            <person name="Smith M."/>
            <person name="Steward C.A."/>
            <person name="Sycamore N."/>
            <person name="Tester J."/>
            <person name="Thomas D.W."/>
            <person name="Tracey A."/>
            <person name="Tromans A."/>
            <person name="Tubby B."/>
            <person name="Wall M."/>
            <person name="Wallis J.M."/>
            <person name="West A.P."/>
            <person name="Whitehead S.L."/>
            <person name="Willey D.L."/>
            <person name="Wilming L."/>
            <person name="Wray P.W."/>
            <person name="Wright M.W."/>
            <person name="Young L."/>
            <person name="Coulson A."/>
            <person name="Durbin R.M."/>
            <person name="Hubbard T."/>
            <person name="Sulston J.E."/>
            <person name="Beck S."/>
            <person name="Bentley D.R."/>
            <person name="Rogers J."/>
            <person name="Ross M.T."/>
        </authorList>
    </citation>
    <scope>NUCLEOTIDE SEQUENCE [LARGE SCALE GENOMIC DNA]</scope>
</reference>
<reference key="5">
    <citation type="submission" date="2005-07" db="EMBL/GenBank/DDBJ databases">
        <authorList>
            <person name="Mural R.J."/>
            <person name="Istrail S."/>
            <person name="Sutton G.G."/>
            <person name="Florea L."/>
            <person name="Halpern A.L."/>
            <person name="Mobarry C.M."/>
            <person name="Lippert R."/>
            <person name="Walenz B."/>
            <person name="Shatkay H."/>
            <person name="Dew I."/>
            <person name="Miller J.R."/>
            <person name="Flanigan M.J."/>
            <person name="Edwards N.J."/>
            <person name="Bolanos R."/>
            <person name="Fasulo D."/>
            <person name="Halldorsson B.V."/>
            <person name="Hannenhalli S."/>
            <person name="Turner R."/>
            <person name="Yooseph S."/>
            <person name="Lu F."/>
            <person name="Nusskern D.R."/>
            <person name="Shue B.C."/>
            <person name="Zheng X.H."/>
            <person name="Zhong F."/>
            <person name="Delcher A.L."/>
            <person name="Huson D.H."/>
            <person name="Kravitz S.A."/>
            <person name="Mouchard L."/>
            <person name="Reinert K."/>
            <person name="Remington K.A."/>
            <person name="Clark A.G."/>
            <person name="Waterman M.S."/>
            <person name="Eichler E.E."/>
            <person name="Adams M.D."/>
            <person name="Hunkapiller M.W."/>
            <person name="Myers E.W."/>
            <person name="Venter J.C."/>
        </authorList>
    </citation>
    <scope>NUCLEOTIDE SEQUENCE [LARGE SCALE GENOMIC DNA]</scope>
</reference>
<name>RXFP2_HUMAN</name>
<organism>
    <name type="scientific">Homo sapiens</name>
    <name type="common">Human</name>
    <dbReference type="NCBI Taxonomy" id="9606"/>
    <lineage>
        <taxon>Eukaryota</taxon>
        <taxon>Metazoa</taxon>
        <taxon>Chordata</taxon>
        <taxon>Craniata</taxon>
        <taxon>Vertebrata</taxon>
        <taxon>Euteleostomi</taxon>
        <taxon>Mammalia</taxon>
        <taxon>Eutheria</taxon>
        <taxon>Euarchontoglires</taxon>
        <taxon>Primates</taxon>
        <taxon>Haplorrhini</taxon>
        <taxon>Catarrhini</taxon>
        <taxon>Hominidae</taxon>
        <taxon>Homo</taxon>
    </lineage>
</organism>
<evidence type="ECO:0000250" key="1"/>
<evidence type="ECO:0000255" key="2"/>
<evidence type="ECO:0000255" key="3">
    <source>
        <dbReference type="PROSITE-ProRule" id="PRU00124"/>
    </source>
</evidence>
<evidence type="ECO:0000255" key="4">
    <source>
        <dbReference type="PROSITE-ProRule" id="PRU00521"/>
    </source>
</evidence>
<evidence type="ECO:0000269" key="5">
    <source>
    </source>
</evidence>
<evidence type="ECO:0000269" key="6">
    <source>
    </source>
</evidence>
<evidence type="ECO:0000303" key="7">
    <source>
    </source>
</evidence>
<evidence type="ECO:0000305" key="8"/>
<evidence type="ECO:0007829" key="9">
    <source>
        <dbReference type="PDB" id="2M96"/>
    </source>
</evidence>
<protein>
    <recommendedName>
        <fullName>Relaxin receptor 2</fullName>
    </recommendedName>
    <alternativeName>
        <fullName>G-protein coupled receptor 106</fullName>
    </alternativeName>
    <alternativeName>
        <fullName>G-protein coupled receptor affecting testicular descent</fullName>
    </alternativeName>
    <alternativeName>
        <fullName>Leucine-rich repeat-containing G-protein coupled receptor 8</fullName>
    </alternativeName>
    <alternativeName>
        <fullName>Relaxin family peptide receptor 2</fullName>
    </alternativeName>
</protein>
<feature type="chain" id="PRO_0000069702" description="Relaxin receptor 2">
    <location>
        <begin position="1"/>
        <end position="754"/>
    </location>
</feature>
<feature type="topological domain" description="Extracellular" evidence="2">
    <location>
        <begin position="1"/>
        <end position="416"/>
    </location>
</feature>
<feature type="transmembrane region" description="Helical; Name=1" evidence="2">
    <location>
        <begin position="417"/>
        <end position="437"/>
    </location>
</feature>
<feature type="topological domain" description="Cytoplasmic" evidence="2">
    <location>
        <begin position="438"/>
        <end position="455"/>
    </location>
</feature>
<feature type="transmembrane region" description="Helical; Name=2" evidence="2">
    <location>
        <begin position="456"/>
        <end position="476"/>
    </location>
</feature>
<feature type="topological domain" description="Extracellular" evidence="2">
    <location>
        <begin position="477"/>
        <end position="495"/>
    </location>
</feature>
<feature type="transmembrane region" description="Helical; Name=3" evidence="2">
    <location>
        <begin position="496"/>
        <end position="518"/>
    </location>
</feature>
<feature type="topological domain" description="Cytoplasmic" evidence="2">
    <location>
        <begin position="519"/>
        <end position="537"/>
    </location>
</feature>
<feature type="transmembrane region" description="Helical; Name=4" evidence="2">
    <location>
        <begin position="538"/>
        <end position="558"/>
    </location>
</feature>
<feature type="topological domain" description="Extracellular" evidence="2">
    <location>
        <begin position="559"/>
        <end position="592"/>
    </location>
</feature>
<feature type="transmembrane region" description="Helical; Name=5" evidence="2">
    <location>
        <begin position="593"/>
        <end position="613"/>
    </location>
</feature>
<feature type="topological domain" description="Cytoplasmic" evidence="2">
    <location>
        <begin position="614"/>
        <end position="639"/>
    </location>
</feature>
<feature type="transmembrane region" description="Helical; Name=6" evidence="2">
    <location>
        <begin position="640"/>
        <end position="660"/>
    </location>
</feature>
<feature type="topological domain" description="Extracellular" evidence="2">
    <location>
        <begin position="661"/>
        <end position="670"/>
    </location>
</feature>
<feature type="transmembrane region" description="Helical; Name=7" evidence="2">
    <location>
        <begin position="671"/>
        <end position="691"/>
    </location>
</feature>
<feature type="topological domain" description="Cytoplasmic" evidence="2">
    <location>
        <begin position="692"/>
        <end position="754"/>
    </location>
</feature>
<feature type="domain" description="LDL-receptor class A" evidence="3">
    <location>
        <begin position="44"/>
        <end position="81"/>
    </location>
</feature>
<feature type="repeat" description="LRR 1">
    <location>
        <begin position="138"/>
        <end position="159"/>
    </location>
</feature>
<feature type="repeat" description="LRR 2">
    <location>
        <begin position="162"/>
        <end position="183"/>
    </location>
</feature>
<feature type="repeat" description="LRR 3">
    <location>
        <begin position="186"/>
        <end position="207"/>
    </location>
</feature>
<feature type="repeat" description="LRR 4">
    <location>
        <begin position="210"/>
        <end position="231"/>
    </location>
</feature>
<feature type="repeat" description="LRR 5">
    <location>
        <begin position="234"/>
        <end position="255"/>
    </location>
</feature>
<feature type="repeat" description="LRR 6">
    <location>
        <begin position="258"/>
        <end position="279"/>
    </location>
</feature>
<feature type="repeat" description="LRR 7">
    <location>
        <begin position="282"/>
        <end position="303"/>
    </location>
</feature>
<feature type="repeat" description="LRR 8">
    <location>
        <begin position="306"/>
        <end position="327"/>
    </location>
</feature>
<feature type="repeat" description="LRR 9">
    <location>
        <begin position="330"/>
        <end position="351"/>
    </location>
</feature>
<feature type="repeat" description="LRR 10">
    <location>
        <begin position="354"/>
        <end position="375"/>
    </location>
</feature>
<feature type="glycosylation site" description="N-linked (GlcNAc...) asparagine" evidence="2">
    <location>
        <position position="54"/>
    </location>
</feature>
<feature type="glycosylation site" description="N-linked (GlcNAc...) asparagine" evidence="2">
    <location>
        <position position="138"/>
    </location>
</feature>
<feature type="glycosylation site" description="N-linked (GlcNAc...) asparagine" evidence="2">
    <location>
        <position position="274"/>
    </location>
</feature>
<feature type="glycosylation site" description="N-linked (GlcNAc...) asparagine" evidence="2">
    <location>
        <position position="335"/>
    </location>
</feature>
<feature type="glycosylation site" description="N-linked (GlcNAc...) asparagine" evidence="2">
    <location>
        <position position="378"/>
    </location>
</feature>
<feature type="disulfide bond" evidence="1">
    <location>
        <begin position="45"/>
        <end position="58"/>
    </location>
</feature>
<feature type="disulfide bond" evidence="1">
    <location>
        <begin position="52"/>
        <end position="71"/>
    </location>
</feature>
<feature type="disulfide bond" evidence="1">
    <location>
        <begin position="65"/>
        <end position="80"/>
    </location>
</feature>
<feature type="disulfide bond" evidence="1">
    <location>
        <begin position="495"/>
        <end position="573"/>
    </location>
</feature>
<feature type="splice variant" id="VSP_042831" description="In isoform 2." evidence="7">
    <location>
        <begin position="286"/>
        <end position="309"/>
    </location>
</feature>
<feature type="sequence variant" id="VAR_015386" description="In CRYPTO; functionally inactive; dbSNP:rs121918303." evidence="6">
    <original>T</original>
    <variation>P</variation>
    <location>
        <position position="222"/>
    </location>
</feature>
<feature type="sequence variant" id="VAR_015387" description="In dbSNP:rs17076657." evidence="6">
    <original>I</original>
    <variation>V</variation>
    <location>
        <position position="604"/>
    </location>
</feature>
<feature type="mutagenesis site" description="Leads to constitutive increase of basal cAMP." evidence="5">
    <original>D</original>
    <variation>Y</variation>
    <location>
        <position position="647"/>
    </location>
</feature>
<feature type="helix" evidence="9">
    <location>
        <begin position="61"/>
        <end position="63"/>
    </location>
</feature>
<feature type="strand" evidence="9">
    <location>
        <begin position="70"/>
        <end position="75"/>
    </location>
</feature>
<dbReference type="EMBL" id="AF403384">
    <property type="protein sequence ID" value="AAL69324.2"/>
    <property type="molecule type" value="mRNA"/>
</dbReference>
<dbReference type="EMBL" id="AF453828">
    <property type="protein sequence ID" value="AAL73946.1"/>
    <property type="molecule type" value="mRNA"/>
</dbReference>
<dbReference type="EMBL" id="AY899851">
    <property type="protein sequence ID" value="AAX85199.1"/>
    <property type="molecule type" value="mRNA"/>
</dbReference>
<dbReference type="EMBL" id="AL138708">
    <property type="status" value="NOT_ANNOTATED_CDS"/>
    <property type="molecule type" value="Genomic_DNA"/>
</dbReference>
<dbReference type="EMBL" id="AL159161">
    <property type="status" value="NOT_ANNOTATED_CDS"/>
    <property type="molecule type" value="Genomic_DNA"/>
</dbReference>
<dbReference type="EMBL" id="CH471075">
    <property type="protein sequence ID" value="EAX08484.1"/>
    <property type="molecule type" value="Genomic_DNA"/>
</dbReference>
<dbReference type="CCDS" id="CCDS53862.1">
    <molecule id="Q8WXD0-2"/>
</dbReference>
<dbReference type="CCDS" id="CCDS9342.1">
    <molecule id="Q8WXD0-1"/>
</dbReference>
<dbReference type="RefSeq" id="NP_001159530.1">
    <molecule id="Q8WXD0-2"/>
    <property type="nucleotide sequence ID" value="NM_001166058.2"/>
</dbReference>
<dbReference type="RefSeq" id="NP_570718.1">
    <molecule id="Q8WXD0-1"/>
    <property type="nucleotide sequence ID" value="NM_130806.5"/>
</dbReference>
<dbReference type="PDB" id="2M96">
    <property type="method" value="NMR"/>
    <property type="chains" value="A=38-81"/>
</dbReference>
<dbReference type="PDBsum" id="2M96"/>
<dbReference type="BMRB" id="Q8WXD0"/>
<dbReference type="SASBDB" id="Q8WXD0"/>
<dbReference type="SMR" id="Q8WXD0"/>
<dbReference type="BioGRID" id="125757">
    <property type="interactions" value="4"/>
</dbReference>
<dbReference type="FunCoup" id="Q8WXD0">
    <property type="interactions" value="555"/>
</dbReference>
<dbReference type="IntAct" id="Q8WXD0">
    <property type="interactions" value="5"/>
</dbReference>
<dbReference type="STRING" id="9606.ENSP00000298386"/>
<dbReference type="ChEMBL" id="CHEMBL1628482"/>
<dbReference type="GuidetoPHARMACOLOGY" id="352"/>
<dbReference type="GlyCosmos" id="Q8WXD0">
    <property type="glycosylation" value="5 sites, No reported glycans"/>
</dbReference>
<dbReference type="GlyGen" id="Q8WXD0">
    <property type="glycosylation" value="5 sites"/>
</dbReference>
<dbReference type="iPTMnet" id="Q8WXD0"/>
<dbReference type="PhosphoSitePlus" id="Q8WXD0"/>
<dbReference type="BioMuta" id="RXFP2"/>
<dbReference type="DMDM" id="21362625"/>
<dbReference type="jPOST" id="Q8WXD0"/>
<dbReference type="MassIVE" id="Q8WXD0"/>
<dbReference type="PaxDb" id="9606-ENSP00000298386"/>
<dbReference type="PeptideAtlas" id="Q8WXD0"/>
<dbReference type="Antibodypedia" id="22835">
    <property type="antibodies" value="311 antibodies from 30 providers"/>
</dbReference>
<dbReference type="DNASU" id="122042"/>
<dbReference type="Ensembl" id="ENST00000298386.7">
    <molecule id="Q8WXD0-1"/>
    <property type="protein sequence ID" value="ENSP00000298386.2"/>
    <property type="gene ID" value="ENSG00000133105.8"/>
</dbReference>
<dbReference type="Ensembl" id="ENST00000380314.2">
    <molecule id="Q8WXD0-2"/>
    <property type="protein sequence ID" value="ENSP00000369670.1"/>
    <property type="gene ID" value="ENSG00000133105.8"/>
</dbReference>
<dbReference type="GeneID" id="122042"/>
<dbReference type="KEGG" id="hsa:122042"/>
<dbReference type="MANE-Select" id="ENST00000298386.7">
    <property type="protein sequence ID" value="ENSP00000298386.2"/>
    <property type="RefSeq nucleotide sequence ID" value="NM_130806.5"/>
    <property type="RefSeq protein sequence ID" value="NP_570718.1"/>
</dbReference>
<dbReference type="UCSC" id="uc001utt.4">
    <molecule id="Q8WXD0-1"/>
    <property type="organism name" value="human"/>
</dbReference>
<dbReference type="AGR" id="HGNC:17318"/>
<dbReference type="CTD" id="122042"/>
<dbReference type="DisGeNET" id="122042"/>
<dbReference type="GeneCards" id="RXFP2"/>
<dbReference type="HGNC" id="HGNC:17318">
    <property type="gene designation" value="RXFP2"/>
</dbReference>
<dbReference type="HPA" id="ENSG00000133105">
    <property type="expression patterns" value="Not detected"/>
</dbReference>
<dbReference type="MalaCards" id="RXFP2"/>
<dbReference type="MIM" id="219050">
    <property type="type" value="phenotype"/>
</dbReference>
<dbReference type="MIM" id="606655">
    <property type="type" value="gene"/>
</dbReference>
<dbReference type="neXtProt" id="NX_Q8WXD0"/>
<dbReference type="OpenTargets" id="ENSG00000133105"/>
<dbReference type="PharmGKB" id="PA134918556"/>
<dbReference type="VEuPathDB" id="HostDB:ENSG00000133105"/>
<dbReference type="eggNOG" id="KOG0619">
    <property type="taxonomic scope" value="Eukaryota"/>
</dbReference>
<dbReference type="eggNOG" id="KOG2087">
    <property type="taxonomic scope" value="Eukaryota"/>
</dbReference>
<dbReference type="GeneTree" id="ENSGT00940000158948"/>
<dbReference type="HOGENOM" id="CLU_006130_2_1_1"/>
<dbReference type="InParanoid" id="Q8WXD0"/>
<dbReference type="OMA" id="NISTQMF"/>
<dbReference type="OrthoDB" id="6022531at2759"/>
<dbReference type="PAN-GO" id="Q8WXD0">
    <property type="GO annotations" value="5 GO annotations based on evolutionary models"/>
</dbReference>
<dbReference type="PhylomeDB" id="Q8WXD0"/>
<dbReference type="TreeFam" id="TF326185"/>
<dbReference type="PathwayCommons" id="Q8WXD0"/>
<dbReference type="Reactome" id="R-HSA-418555">
    <property type="pathway name" value="G alpha (s) signalling events"/>
</dbReference>
<dbReference type="Reactome" id="R-HSA-444821">
    <property type="pathway name" value="Relaxin receptors"/>
</dbReference>
<dbReference type="SignaLink" id="Q8WXD0"/>
<dbReference type="SIGNOR" id="Q8WXD0"/>
<dbReference type="BioGRID-ORCS" id="122042">
    <property type="hits" value="5 hits in 1135 CRISPR screens"/>
</dbReference>
<dbReference type="ChiTaRS" id="RXFP2">
    <property type="organism name" value="human"/>
</dbReference>
<dbReference type="EvolutionaryTrace" id="Q8WXD0"/>
<dbReference type="GeneWiki" id="Relaxin/insulin-like_family_peptide_receptor_2"/>
<dbReference type="GenomeRNAi" id="122042"/>
<dbReference type="Pharos" id="Q8WXD0">
    <property type="development level" value="Tbio"/>
</dbReference>
<dbReference type="PRO" id="PR:Q8WXD0"/>
<dbReference type="Proteomes" id="UP000005640">
    <property type="component" value="Chromosome 13"/>
</dbReference>
<dbReference type="RNAct" id="Q8WXD0">
    <property type="molecule type" value="protein"/>
</dbReference>
<dbReference type="Bgee" id="ENSG00000133105">
    <property type="expression patterns" value="Expressed in male germ line stem cell (sensu Vertebrata) in testis and 42 other cell types or tissues"/>
</dbReference>
<dbReference type="GO" id="GO:0005886">
    <property type="term" value="C:plasma membrane"/>
    <property type="evidence" value="ECO:0000318"/>
    <property type="project" value="GO_Central"/>
</dbReference>
<dbReference type="GO" id="GO:0008528">
    <property type="term" value="F:G protein-coupled peptide receptor activity"/>
    <property type="evidence" value="ECO:0000318"/>
    <property type="project" value="GO_Central"/>
</dbReference>
<dbReference type="GO" id="GO:0017046">
    <property type="term" value="F:peptide hormone binding"/>
    <property type="evidence" value="ECO:0007669"/>
    <property type="project" value="Ensembl"/>
</dbReference>
<dbReference type="GO" id="GO:0016500">
    <property type="term" value="F:protein-hormone receptor activity"/>
    <property type="evidence" value="ECO:0007669"/>
    <property type="project" value="Ensembl"/>
</dbReference>
<dbReference type="GO" id="GO:0007189">
    <property type="term" value="P:adenylate cyclase-activating G protein-coupled receptor signaling pathway"/>
    <property type="evidence" value="ECO:0000318"/>
    <property type="project" value="GO_Central"/>
</dbReference>
<dbReference type="GO" id="GO:0007193">
    <property type="term" value="P:adenylate cyclase-inhibiting G protein-coupled receptor signaling pathway"/>
    <property type="evidence" value="ECO:0007669"/>
    <property type="project" value="Ensembl"/>
</dbReference>
<dbReference type="GO" id="GO:0009755">
    <property type="term" value="P:hormone-mediated signaling pathway"/>
    <property type="evidence" value="ECO:0000318"/>
    <property type="project" value="GO_Central"/>
</dbReference>
<dbReference type="GO" id="GO:0008584">
    <property type="term" value="P:male gonad development"/>
    <property type="evidence" value="ECO:0007669"/>
    <property type="project" value="Ensembl"/>
</dbReference>
<dbReference type="GO" id="GO:0043066">
    <property type="term" value="P:negative regulation of apoptotic process"/>
    <property type="evidence" value="ECO:0007669"/>
    <property type="project" value="Ensembl"/>
</dbReference>
<dbReference type="GO" id="GO:0008285">
    <property type="term" value="P:negative regulation of cell population proliferation"/>
    <property type="evidence" value="ECO:0007669"/>
    <property type="project" value="Ensembl"/>
</dbReference>
<dbReference type="GO" id="GO:0001556">
    <property type="term" value="P:oocyte maturation"/>
    <property type="evidence" value="ECO:0007669"/>
    <property type="project" value="Ensembl"/>
</dbReference>
<dbReference type="CDD" id="cd15966">
    <property type="entry name" value="7tmA_RXFP2_LGR8"/>
    <property type="match status" value="1"/>
</dbReference>
<dbReference type="CDD" id="cd00112">
    <property type="entry name" value="LDLa"/>
    <property type="match status" value="1"/>
</dbReference>
<dbReference type="FunFam" id="1.20.1070.10:FF:000023">
    <property type="entry name" value="Relaxin family peptide receptor 1"/>
    <property type="match status" value="1"/>
</dbReference>
<dbReference type="FunFam" id="4.10.400.10:FF:000014">
    <property type="entry name" value="Relaxin family peptide receptor 1"/>
    <property type="match status" value="1"/>
</dbReference>
<dbReference type="FunFam" id="3.80.10.10:FF:000207">
    <property type="entry name" value="Relaxin family peptide receptor 2"/>
    <property type="match status" value="1"/>
</dbReference>
<dbReference type="FunFam" id="3.80.10.10:FF:000300">
    <property type="entry name" value="Relaxin family peptide receptor 2"/>
    <property type="match status" value="1"/>
</dbReference>
<dbReference type="Gene3D" id="4.10.400.10">
    <property type="entry name" value="Low-density Lipoprotein Receptor"/>
    <property type="match status" value="1"/>
</dbReference>
<dbReference type="Gene3D" id="1.20.1070.10">
    <property type="entry name" value="Rhodopsin 7-helix transmembrane proteins"/>
    <property type="match status" value="1"/>
</dbReference>
<dbReference type="Gene3D" id="3.80.10.10">
    <property type="entry name" value="Ribonuclease Inhibitor"/>
    <property type="match status" value="2"/>
</dbReference>
<dbReference type="InterPro" id="IPR000276">
    <property type="entry name" value="GPCR_Rhodpsn"/>
</dbReference>
<dbReference type="InterPro" id="IPR017452">
    <property type="entry name" value="GPCR_Rhodpsn_7TM"/>
</dbReference>
<dbReference type="InterPro" id="IPR036055">
    <property type="entry name" value="LDL_receptor-like_sf"/>
</dbReference>
<dbReference type="InterPro" id="IPR023415">
    <property type="entry name" value="LDLR_class-A_CS"/>
</dbReference>
<dbReference type="InterPro" id="IPR002172">
    <property type="entry name" value="LDrepeatLR_classA_rpt"/>
</dbReference>
<dbReference type="InterPro" id="IPR001611">
    <property type="entry name" value="Leu-rich_rpt"/>
</dbReference>
<dbReference type="InterPro" id="IPR003591">
    <property type="entry name" value="Leu-rich_rpt_typical-subtyp"/>
</dbReference>
<dbReference type="InterPro" id="IPR032675">
    <property type="entry name" value="LRR_dom_sf"/>
</dbReference>
<dbReference type="InterPro" id="IPR008112">
    <property type="entry name" value="Relaxin_rcpt"/>
</dbReference>
<dbReference type="PANTHER" id="PTHR24372">
    <property type="entry name" value="GLYCOPROTEIN HORMONE RECEPTOR"/>
    <property type="match status" value="1"/>
</dbReference>
<dbReference type="PANTHER" id="PTHR24372:SF72">
    <property type="entry name" value="RELAXIN RECEPTOR 2"/>
    <property type="match status" value="1"/>
</dbReference>
<dbReference type="Pfam" id="PF00001">
    <property type="entry name" value="7tm_1"/>
    <property type="match status" value="1"/>
</dbReference>
<dbReference type="Pfam" id="PF00057">
    <property type="entry name" value="Ldl_recept_a"/>
    <property type="match status" value="1"/>
</dbReference>
<dbReference type="Pfam" id="PF13855">
    <property type="entry name" value="LRR_8"/>
    <property type="match status" value="3"/>
</dbReference>
<dbReference type="PRINTS" id="PR00237">
    <property type="entry name" value="GPCRRHODOPSN"/>
</dbReference>
<dbReference type="PRINTS" id="PR01739">
    <property type="entry name" value="RELAXINR"/>
</dbReference>
<dbReference type="SMART" id="SM00192">
    <property type="entry name" value="LDLa"/>
    <property type="match status" value="1"/>
</dbReference>
<dbReference type="SMART" id="SM00369">
    <property type="entry name" value="LRR_TYP"/>
    <property type="match status" value="10"/>
</dbReference>
<dbReference type="SUPFAM" id="SSF81321">
    <property type="entry name" value="Family A G protein-coupled receptor-like"/>
    <property type="match status" value="1"/>
</dbReference>
<dbReference type="SUPFAM" id="SSF52058">
    <property type="entry name" value="L domain-like"/>
    <property type="match status" value="1"/>
</dbReference>
<dbReference type="SUPFAM" id="SSF57424">
    <property type="entry name" value="LDL receptor-like module"/>
    <property type="match status" value="1"/>
</dbReference>
<dbReference type="PROSITE" id="PS50262">
    <property type="entry name" value="G_PROTEIN_RECEP_F1_2"/>
    <property type="match status" value="1"/>
</dbReference>
<dbReference type="PROSITE" id="PS01209">
    <property type="entry name" value="LDLRA_1"/>
    <property type="match status" value="1"/>
</dbReference>
<dbReference type="PROSITE" id="PS50068">
    <property type="entry name" value="LDLRA_2"/>
    <property type="match status" value="1"/>
</dbReference>
<dbReference type="PROSITE" id="PS51450">
    <property type="entry name" value="LRR"/>
    <property type="match status" value="9"/>
</dbReference>
<keyword id="KW-0002">3D-structure</keyword>
<keyword id="KW-0025">Alternative splicing</keyword>
<keyword id="KW-1003">Cell membrane</keyword>
<keyword id="KW-0225">Disease variant</keyword>
<keyword id="KW-1015">Disulfide bond</keyword>
<keyword id="KW-0297">G-protein coupled receptor</keyword>
<keyword id="KW-0325">Glycoprotein</keyword>
<keyword id="KW-0433">Leucine-rich repeat</keyword>
<keyword id="KW-0472">Membrane</keyword>
<keyword id="KW-0675">Receptor</keyword>
<keyword id="KW-1185">Reference proteome</keyword>
<keyword id="KW-0677">Repeat</keyword>
<keyword id="KW-0807">Transducer</keyword>
<keyword id="KW-0812">Transmembrane</keyword>
<keyword id="KW-1133">Transmembrane helix</keyword>
<gene>
    <name type="primary">RXFP2</name>
    <name type="synonym">GPR106</name>
    <name type="synonym">GREAT</name>
    <name type="synonym">LGR8</name>
</gene>